<feature type="chain" id="PRO_0000317353" description="UPF0512 protein O">
    <location>
        <begin position="1"/>
        <end position="84"/>
    </location>
</feature>
<dbReference type="EMBL" id="AAFI02000036">
    <property type="protein sequence ID" value="EAL67212.1"/>
    <property type="molecule type" value="Genomic_DNA"/>
</dbReference>
<dbReference type="RefSeq" id="XP_641192.1">
    <property type="nucleotide sequence ID" value="XM_636100.1"/>
</dbReference>
<dbReference type="PaxDb" id="44689-DDB0266559"/>
<dbReference type="EnsemblProtists" id="EAL67212">
    <property type="protein sequence ID" value="EAL67212"/>
    <property type="gene ID" value="DDB_G0280467"/>
</dbReference>
<dbReference type="GeneID" id="8622573"/>
<dbReference type="KEGG" id="ddi:DDB_G0280467"/>
<dbReference type="dictyBase" id="DDB_G0280467"/>
<dbReference type="HOGENOM" id="CLU_194865_0_0_1"/>
<dbReference type="InParanoid" id="Q54VB7"/>
<dbReference type="OMA" id="DINIGRH"/>
<dbReference type="PRO" id="PR:Q54VB7"/>
<dbReference type="Proteomes" id="UP000002195">
    <property type="component" value="Chromosome 3"/>
</dbReference>
<organism>
    <name type="scientific">Dictyostelium discoideum</name>
    <name type="common">Social amoeba</name>
    <dbReference type="NCBI Taxonomy" id="44689"/>
    <lineage>
        <taxon>Eukaryota</taxon>
        <taxon>Amoebozoa</taxon>
        <taxon>Evosea</taxon>
        <taxon>Eumycetozoa</taxon>
        <taxon>Dictyostelia</taxon>
        <taxon>Dictyosteliales</taxon>
        <taxon>Dictyosteliaceae</taxon>
        <taxon>Dictyostelium</taxon>
    </lineage>
</organism>
<accession>Q54VB7</accession>
<sequence length="84" mass="8478">MTLFNSISSISNSTGLYKQSLIANVDGMTISSSGNSSSWLSGFDGCGGCGGFGGCGGGFGGCGGSNLNIINVDMNIGRRHRRCC</sequence>
<evidence type="ECO:0000305" key="1"/>
<proteinExistence type="inferred from homology"/>
<name>U512O_DICDI</name>
<reference key="1">
    <citation type="journal article" date="2005" name="Nature">
        <title>The genome of the social amoeba Dictyostelium discoideum.</title>
        <authorList>
            <person name="Eichinger L."/>
            <person name="Pachebat J.A."/>
            <person name="Gloeckner G."/>
            <person name="Rajandream M.A."/>
            <person name="Sucgang R."/>
            <person name="Berriman M."/>
            <person name="Song J."/>
            <person name="Olsen R."/>
            <person name="Szafranski K."/>
            <person name="Xu Q."/>
            <person name="Tunggal B."/>
            <person name="Kummerfeld S."/>
            <person name="Madera M."/>
            <person name="Konfortov B.A."/>
            <person name="Rivero F."/>
            <person name="Bankier A.T."/>
            <person name="Lehmann R."/>
            <person name="Hamlin N."/>
            <person name="Davies R."/>
            <person name="Gaudet P."/>
            <person name="Fey P."/>
            <person name="Pilcher K."/>
            <person name="Chen G."/>
            <person name="Saunders D."/>
            <person name="Sodergren E.J."/>
            <person name="Davis P."/>
            <person name="Kerhornou A."/>
            <person name="Nie X."/>
            <person name="Hall N."/>
            <person name="Anjard C."/>
            <person name="Hemphill L."/>
            <person name="Bason N."/>
            <person name="Farbrother P."/>
            <person name="Desany B."/>
            <person name="Just E."/>
            <person name="Morio T."/>
            <person name="Rost R."/>
            <person name="Churcher C.M."/>
            <person name="Cooper J."/>
            <person name="Haydock S."/>
            <person name="van Driessche N."/>
            <person name="Cronin A."/>
            <person name="Goodhead I."/>
            <person name="Muzny D.M."/>
            <person name="Mourier T."/>
            <person name="Pain A."/>
            <person name="Lu M."/>
            <person name="Harper D."/>
            <person name="Lindsay R."/>
            <person name="Hauser H."/>
            <person name="James K.D."/>
            <person name="Quiles M."/>
            <person name="Madan Babu M."/>
            <person name="Saito T."/>
            <person name="Buchrieser C."/>
            <person name="Wardroper A."/>
            <person name="Felder M."/>
            <person name="Thangavelu M."/>
            <person name="Johnson D."/>
            <person name="Knights A."/>
            <person name="Loulseged H."/>
            <person name="Mungall K.L."/>
            <person name="Oliver K."/>
            <person name="Price C."/>
            <person name="Quail M.A."/>
            <person name="Urushihara H."/>
            <person name="Hernandez J."/>
            <person name="Rabbinowitsch E."/>
            <person name="Steffen D."/>
            <person name="Sanders M."/>
            <person name="Ma J."/>
            <person name="Kohara Y."/>
            <person name="Sharp S."/>
            <person name="Simmonds M.N."/>
            <person name="Spiegler S."/>
            <person name="Tivey A."/>
            <person name="Sugano S."/>
            <person name="White B."/>
            <person name="Walker D."/>
            <person name="Woodward J.R."/>
            <person name="Winckler T."/>
            <person name="Tanaka Y."/>
            <person name="Shaulsky G."/>
            <person name="Schleicher M."/>
            <person name="Weinstock G.M."/>
            <person name="Rosenthal A."/>
            <person name="Cox E.C."/>
            <person name="Chisholm R.L."/>
            <person name="Gibbs R.A."/>
            <person name="Loomis W.F."/>
            <person name="Platzer M."/>
            <person name="Kay R.R."/>
            <person name="Williams J.G."/>
            <person name="Dear P.H."/>
            <person name="Noegel A.A."/>
            <person name="Barrell B.G."/>
            <person name="Kuspa A."/>
        </authorList>
    </citation>
    <scope>NUCLEOTIDE SEQUENCE [LARGE SCALE GENOMIC DNA]</scope>
    <source>
        <strain>AX4</strain>
    </source>
</reference>
<gene>
    <name type="ORF">DDB_G0280467</name>
</gene>
<keyword id="KW-1185">Reference proteome</keyword>
<protein>
    <recommendedName>
        <fullName>UPF0512 protein O</fullName>
    </recommendedName>
</protein>
<comment type="similarity">
    <text evidence="1">Belongs to the UPF0512 family.</text>
</comment>